<dbReference type="EC" id="2.1.1.107" evidence="1"/>
<dbReference type="EC" id="1.3.1.76" evidence="1"/>
<dbReference type="EC" id="4.99.1.4" evidence="1"/>
<dbReference type="EMBL" id="AL954747">
    <property type="protein sequence ID" value="CAD84443.1"/>
    <property type="status" value="ALT_INIT"/>
    <property type="molecule type" value="Genomic_DNA"/>
</dbReference>
<dbReference type="RefSeq" id="WP_041357033.1">
    <property type="nucleotide sequence ID" value="NC_004757.1"/>
</dbReference>
<dbReference type="SMR" id="Q820Q4"/>
<dbReference type="STRING" id="228410.NE0532"/>
<dbReference type="GeneID" id="87103735"/>
<dbReference type="KEGG" id="neu:NE0532"/>
<dbReference type="eggNOG" id="COG0007">
    <property type="taxonomic scope" value="Bacteria"/>
</dbReference>
<dbReference type="eggNOG" id="COG1648">
    <property type="taxonomic scope" value="Bacteria"/>
</dbReference>
<dbReference type="HOGENOM" id="CLU_011276_2_0_4"/>
<dbReference type="OrthoDB" id="9815856at2"/>
<dbReference type="UniPathway" id="UPA00148">
    <property type="reaction ID" value="UER00211"/>
</dbReference>
<dbReference type="UniPathway" id="UPA00148">
    <property type="reaction ID" value="UER00222"/>
</dbReference>
<dbReference type="UniPathway" id="UPA00262">
    <property type="reaction ID" value="UER00211"/>
</dbReference>
<dbReference type="UniPathway" id="UPA00262">
    <property type="reaction ID" value="UER00222"/>
</dbReference>
<dbReference type="UniPathway" id="UPA00262">
    <property type="reaction ID" value="UER00376"/>
</dbReference>
<dbReference type="Proteomes" id="UP000001416">
    <property type="component" value="Chromosome"/>
</dbReference>
<dbReference type="GO" id="GO:0051287">
    <property type="term" value="F:NAD binding"/>
    <property type="evidence" value="ECO:0007669"/>
    <property type="project" value="InterPro"/>
</dbReference>
<dbReference type="GO" id="GO:0043115">
    <property type="term" value="F:precorrin-2 dehydrogenase activity"/>
    <property type="evidence" value="ECO:0007669"/>
    <property type="project" value="UniProtKB-UniRule"/>
</dbReference>
<dbReference type="GO" id="GO:0051266">
    <property type="term" value="F:sirohydrochlorin ferrochelatase activity"/>
    <property type="evidence" value="ECO:0007669"/>
    <property type="project" value="UniProtKB-EC"/>
</dbReference>
<dbReference type="GO" id="GO:0004851">
    <property type="term" value="F:uroporphyrin-III C-methyltransferase activity"/>
    <property type="evidence" value="ECO:0007669"/>
    <property type="project" value="UniProtKB-UniRule"/>
</dbReference>
<dbReference type="GO" id="GO:0009236">
    <property type="term" value="P:cobalamin biosynthetic process"/>
    <property type="evidence" value="ECO:0007669"/>
    <property type="project" value="UniProtKB-UniRule"/>
</dbReference>
<dbReference type="GO" id="GO:0032259">
    <property type="term" value="P:methylation"/>
    <property type="evidence" value="ECO:0007669"/>
    <property type="project" value="UniProtKB-KW"/>
</dbReference>
<dbReference type="GO" id="GO:0019354">
    <property type="term" value="P:siroheme biosynthetic process"/>
    <property type="evidence" value="ECO:0007669"/>
    <property type="project" value="UniProtKB-UniRule"/>
</dbReference>
<dbReference type="CDD" id="cd11642">
    <property type="entry name" value="SUMT"/>
    <property type="match status" value="1"/>
</dbReference>
<dbReference type="FunFam" id="3.30.160.110:FF:000001">
    <property type="entry name" value="Siroheme synthase"/>
    <property type="match status" value="1"/>
</dbReference>
<dbReference type="FunFam" id="3.30.950.10:FF:000001">
    <property type="entry name" value="Siroheme synthase"/>
    <property type="match status" value="1"/>
</dbReference>
<dbReference type="FunFam" id="3.40.1010.10:FF:000001">
    <property type="entry name" value="Siroheme synthase"/>
    <property type="match status" value="1"/>
</dbReference>
<dbReference type="Gene3D" id="3.40.1010.10">
    <property type="entry name" value="Cobalt-precorrin-4 Transmethylase, Domain 1"/>
    <property type="match status" value="1"/>
</dbReference>
<dbReference type="Gene3D" id="3.30.950.10">
    <property type="entry name" value="Methyltransferase, Cobalt-precorrin-4 Transmethylase, Domain 2"/>
    <property type="match status" value="1"/>
</dbReference>
<dbReference type="Gene3D" id="3.40.50.720">
    <property type="entry name" value="NAD(P)-binding Rossmann-like Domain"/>
    <property type="match status" value="1"/>
</dbReference>
<dbReference type="Gene3D" id="1.10.8.210">
    <property type="entry name" value="Sirohaem synthase, dimerisation domain"/>
    <property type="match status" value="1"/>
</dbReference>
<dbReference type="Gene3D" id="3.30.160.110">
    <property type="entry name" value="Siroheme synthase, domain 2"/>
    <property type="match status" value="1"/>
</dbReference>
<dbReference type="HAMAP" id="MF_01646">
    <property type="entry name" value="Siroheme_synth"/>
    <property type="match status" value="1"/>
</dbReference>
<dbReference type="InterPro" id="IPR000878">
    <property type="entry name" value="4pyrrol_Mease"/>
</dbReference>
<dbReference type="InterPro" id="IPR035996">
    <property type="entry name" value="4pyrrol_Methylase_sf"/>
</dbReference>
<dbReference type="InterPro" id="IPR014777">
    <property type="entry name" value="4pyrrole_Mease_sub1"/>
</dbReference>
<dbReference type="InterPro" id="IPR014776">
    <property type="entry name" value="4pyrrole_Mease_sub2"/>
</dbReference>
<dbReference type="InterPro" id="IPR006366">
    <property type="entry name" value="CobA/CysG_C"/>
</dbReference>
<dbReference type="InterPro" id="IPR036291">
    <property type="entry name" value="NAD(P)-bd_dom_sf"/>
</dbReference>
<dbReference type="InterPro" id="IPR050161">
    <property type="entry name" value="Siro_Cobalamin_biosynth"/>
</dbReference>
<dbReference type="InterPro" id="IPR037115">
    <property type="entry name" value="Sirohaem_synt_dimer_dom_sf"/>
</dbReference>
<dbReference type="InterPro" id="IPR012409">
    <property type="entry name" value="Sirohaem_synth"/>
</dbReference>
<dbReference type="InterPro" id="IPR028281">
    <property type="entry name" value="Sirohaem_synthase_central"/>
</dbReference>
<dbReference type="InterPro" id="IPR019478">
    <property type="entry name" value="Sirohaem_synthase_dimer_dom"/>
</dbReference>
<dbReference type="InterPro" id="IPR006367">
    <property type="entry name" value="Sirohaem_synthase_N"/>
</dbReference>
<dbReference type="InterPro" id="IPR003043">
    <property type="entry name" value="Uropor_MeTrfase_CS"/>
</dbReference>
<dbReference type="NCBIfam" id="TIGR01469">
    <property type="entry name" value="cobA_cysG_Cterm"/>
    <property type="match status" value="1"/>
</dbReference>
<dbReference type="NCBIfam" id="TIGR01470">
    <property type="entry name" value="cysG_Nterm"/>
    <property type="match status" value="1"/>
</dbReference>
<dbReference type="NCBIfam" id="NF004790">
    <property type="entry name" value="PRK06136.1"/>
    <property type="match status" value="1"/>
</dbReference>
<dbReference type="NCBIfam" id="NF007922">
    <property type="entry name" value="PRK10637.1"/>
    <property type="match status" value="1"/>
</dbReference>
<dbReference type="PANTHER" id="PTHR45790:SF1">
    <property type="entry name" value="SIROHEME SYNTHASE"/>
    <property type="match status" value="1"/>
</dbReference>
<dbReference type="PANTHER" id="PTHR45790">
    <property type="entry name" value="SIROHEME SYNTHASE-RELATED"/>
    <property type="match status" value="1"/>
</dbReference>
<dbReference type="Pfam" id="PF10414">
    <property type="entry name" value="CysG_dimeriser"/>
    <property type="match status" value="1"/>
</dbReference>
<dbReference type="Pfam" id="PF13241">
    <property type="entry name" value="NAD_binding_7"/>
    <property type="match status" value="1"/>
</dbReference>
<dbReference type="Pfam" id="PF14824">
    <property type="entry name" value="Sirohm_synth_M"/>
    <property type="match status" value="1"/>
</dbReference>
<dbReference type="Pfam" id="PF00590">
    <property type="entry name" value="TP_methylase"/>
    <property type="match status" value="1"/>
</dbReference>
<dbReference type="PIRSF" id="PIRSF036426">
    <property type="entry name" value="Sirohaem_synth"/>
    <property type="match status" value="1"/>
</dbReference>
<dbReference type="SUPFAM" id="SSF51735">
    <property type="entry name" value="NAD(P)-binding Rossmann-fold domains"/>
    <property type="match status" value="1"/>
</dbReference>
<dbReference type="SUPFAM" id="SSF75615">
    <property type="entry name" value="Siroheme synthase middle domains-like"/>
    <property type="match status" value="1"/>
</dbReference>
<dbReference type="SUPFAM" id="SSF53790">
    <property type="entry name" value="Tetrapyrrole methylase"/>
    <property type="match status" value="1"/>
</dbReference>
<dbReference type="PROSITE" id="PS00840">
    <property type="entry name" value="SUMT_2"/>
    <property type="match status" value="1"/>
</dbReference>
<feature type="chain" id="PRO_0000330526" description="Siroheme synthase">
    <location>
        <begin position="1"/>
        <end position="475"/>
    </location>
</feature>
<feature type="region of interest" description="Precorrin-2 dehydrogenase /sirohydrochlorin ferrochelatase" evidence="1">
    <location>
        <begin position="1"/>
        <end position="204"/>
    </location>
</feature>
<feature type="region of interest" description="Uroporphyrinogen-III C-methyltransferase" evidence="1">
    <location>
        <begin position="218"/>
        <end position="475"/>
    </location>
</feature>
<feature type="active site" description="Proton acceptor" evidence="1">
    <location>
        <position position="250"/>
    </location>
</feature>
<feature type="active site" description="Proton donor" evidence="1">
    <location>
        <position position="272"/>
    </location>
</feature>
<feature type="binding site" evidence="1">
    <location>
        <begin position="22"/>
        <end position="23"/>
    </location>
    <ligand>
        <name>NAD(+)</name>
        <dbReference type="ChEBI" id="CHEBI:57540"/>
    </ligand>
</feature>
<feature type="binding site" evidence="1">
    <location>
        <begin position="43"/>
        <end position="44"/>
    </location>
    <ligand>
        <name>NAD(+)</name>
        <dbReference type="ChEBI" id="CHEBI:57540"/>
    </ligand>
</feature>
<feature type="binding site" evidence="1">
    <location>
        <position position="227"/>
    </location>
    <ligand>
        <name>S-adenosyl-L-methionine</name>
        <dbReference type="ChEBI" id="CHEBI:59789"/>
    </ligand>
</feature>
<feature type="binding site" evidence="1">
    <location>
        <begin position="303"/>
        <end position="305"/>
    </location>
    <ligand>
        <name>S-adenosyl-L-methionine</name>
        <dbReference type="ChEBI" id="CHEBI:59789"/>
    </ligand>
</feature>
<feature type="binding site" evidence="1">
    <location>
        <position position="308"/>
    </location>
    <ligand>
        <name>S-adenosyl-L-methionine</name>
        <dbReference type="ChEBI" id="CHEBI:59789"/>
    </ligand>
</feature>
<feature type="binding site" evidence="1">
    <location>
        <begin position="333"/>
        <end position="334"/>
    </location>
    <ligand>
        <name>S-adenosyl-L-methionine</name>
        <dbReference type="ChEBI" id="CHEBI:59789"/>
    </ligand>
</feature>
<feature type="binding site" evidence="1">
    <location>
        <position position="385"/>
    </location>
    <ligand>
        <name>S-adenosyl-L-methionine</name>
        <dbReference type="ChEBI" id="CHEBI:59789"/>
    </ligand>
</feature>
<feature type="binding site" evidence="1">
    <location>
        <position position="414"/>
    </location>
    <ligand>
        <name>S-adenosyl-L-methionine</name>
        <dbReference type="ChEBI" id="CHEBI:59789"/>
    </ligand>
</feature>
<feature type="modified residue" description="Phosphoserine" evidence="1">
    <location>
        <position position="129"/>
    </location>
</feature>
<reference key="1">
    <citation type="journal article" date="2003" name="J. Bacteriol.">
        <title>Complete genome sequence of the ammonia-oxidizing bacterium and obligate chemolithoautotroph Nitrosomonas europaea.</title>
        <authorList>
            <person name="Chain P."/>
            <person name="Lamerdin J.E."/>
            <person name="Larimer F.W."/>
            <person name="Regala W."/>
            <person name="Lao V."/>
            <person name="Land M.L."/>
            <person name="Hauser L."/>
            <person name="Hooper A.B."/>
            <person name="Klotz M.G."/>
            <person name="Norton J."/>
            <person name="Sayavedra-Soto L.A."/>
            <person name="Arciero D.M."/>
            <person name="Hommes N.G."/>
            <person name="Whittaker M.M."/>
            <person name="Arp D.J."/>
        </authorList>
    </citation>
    <scope>NUCLEOTIDE SEQUENCE [LARGE SCALE GENOMIC DNA]</scope>
    <source>
        <strain>ATCC 19718 / CIP 103999 / KCTC 2705 / NBRC 14298</strain>
    </source>
</reference>
<evidence type="ECO:0000255" key="1">
    <source>
        <dbReference type="HAMAP-Rule" id="MF_01646"/>
    </source>
</evidence>
<evidence type="ECO:0000305" key="2"/>
<organism>
    <name type="scientific">Nitrosomonas europaea (strain ATCC 19718 / CIP 103999 / KCTC 2705 / NBRC 14298)</name>
    <dbReference type="NCBI Taxonomy" id="228410"/>
    <lineage>
        <taxon>Bacteria</taxon>
        <taxon>Pseudomonadati</taxon>
        <taxon>Pseudomonadota</taxon>
        <taxon>Betaproteobacteria</taxon>
        <taxon>Nitrosomonadales</taxon>
        <taxon>Nitrosomonadaceae</taxon>
        <taxon>Nitrosomonas</taxon>
    </lineage>
</organism>
<comment type="function">
    <text evidence="1">Multifunctional enzyme that catalyzes the SAM-dependent methylations of uroporphyrinogen III at position C-2 and C-7 to form precorrin-2 via precorrin-1. Then it catalyzes the NAD-dependent ring dehydrogenation of precorrin-2 to yield sirohydrochlorin. Finally, it catalyzes the ferrochelation of sirohydrochlorin to yield siroheme.</text>
</comment>
<comment type="catalytic activity">
    <reaction evidence="1">
        <text>uroporphyrinogen III + 2 S-adenosyl-L-methionine = precorrin-2 + 2 S-adenosyl-L-homocysteine + H(+)</text>
        <dbReference type="Rhea" id="RHEA:32459"/>
        <dbReference type="ChEBI" id="CHEBI:15378"/>
        <dbReference type="ChEBI" id="CHEBI:57308"/>
        <dbReference type="ChEBI" id="CHEBI:57856"/>
        <dbReference type="ChEBI" id="CHEBI:58827"/>
        <dbReference type="ChEBI" id="CHEBI:59789"/>
        <dbReference type="EC" id="2.1.1.107"/>
    </reaction>
</comment>
<comment type="catalytic activity">
    <reaction evidence="1">
        <text>precorrin-2 + NAD(+) = sirohydrochlorin + NADH + 2 H(+)</text>
        <dbReference type="Rhea" id="RHEA:15613"/>
        <dbReference type="ChEBI" id="CHEBI:15378"/>
        <dbReference type="ChEBI" id="CHEBI:57540"/>
        <dbReference type="ChEBI" id="CHEBI:57945"/>
        <dbReference type="ChEBI" id="CHEBI:58351"/>
        <dbReference type="ChEBI" id="CHEBI:58827"/>
        <dbReference type="EC" id="1.3.1.76"/>
    </reaction>
</comment>
<comment type="catalytic activity">
    <reaction evidence="1">
        <text>siroheme + 2 H(+) = sirohydrochlorin + Fe(2+)</text>
        <dbReference type="Rhea" id="RHEA:24360"/>
        <dbReference type="ChEBI" id="CHEBI:15378"/>
        <dbReference type="ChEBI" id="CHEBI:29033"/>
        <dbReference type="ChEBI" id="CHEBI:58351"/>
        <dbReference type="ChEBI" id="CHEBI:60052"/>
        <dbReference type="EC" id="4.99.1.4"/>
    </reaction>
</comment>
<comment type="pathway">
    <text evidence="1">Cofactor biosynthesis; adenosylcobalamin biosynthesis; precorrin-2 from uroporphyrinogen III: step 1/1.</text>
</comment>
<comment type="pathway">
    <text evidence="1">Cofactor biosynthesis; adenosylcobalamin biosynthesis; sirohydrochlorin from precorrin-2: step 1/1.</text>
</comment>
<comment type="pathway">
    <text evidence="1">Porphyrin-containing compound metabolism; siroheme biosynthesis; precorrin-2 from uroporphyrinogen III: step 1/1.</text>
</comment>
<comment type="pathway">
    <text evidence="1">Porphyrin-containing compound metabolism; siroheme biosynthesis; siroheme from sirohydrochlorin: step 1/1.</text>
</comment>
<comment type="pathway">
    <text evidence="1">Porphyrin-containing compound metabolism; siroheme biosynthesis; sirohydrochlorin from precorrin-2: step 1/1.</text>
</comment>
<comment type="similarity">
    <text evidence="1">In the N-terminal section; belongs to the precorrin-2 dehydrogenase / sirohydrochlorin ferrochelatase family.</text>
</comment>
<comment type="similarity">
    <text evidence="1">In the C-terminal section; belongs to the precorrin methyltransferase family.</text>
</comment>
<comment type="sequence caution" evidence="2">
    <conflict type="erroneous initiation">
        <sequence resource="EMBL-CDS" id="CAD84443"/>
    </conflict>
    <text>Extended N-terminus.</text>
</comment>
<proteinExistence type="inferred from homology"/>
<accession>Q820Q4</accession>
<gene>
    <name evidence="1" type="primary">cysG</name>
    <name type="ordered locus">NE0532</name>
</gene>
<protein>
    <recommendedName>
        <fullName evidence="1">Siroheme synthase</fullName>
    </recommendedName>
    <domain>
        <recommendedName>
            <fullName evidence="1">Uroporphyrinogen-III C-methyltransferase</fullName>
            <shortName evidence="1">Urogen III methylase</shortName>
            <ecNumber evidence="1">2.1.1.107</ecNumber>
        </recommendedName>
        <alternativeName>
            <fullName evidence="1">SUMT</fullName>
        </alternativeName>
        <alternativeName>
            <fullName evidence="1">Uroporphyrinogen III methylase</fullName>
            <shortName evidence="1">UROM</shortName>
        </alternativeName>
    </domain>
    <domain>
        <recommendedName>
            <fullName evidence="1">Precorrin-2 dehydrogenase</fullName>
            <ecNumber evidence="1">1.3.1.76</ecNumber>
        </recommendedName>
    </domain>
    <domain>
        <recommendedName>
            <fullName evidence="1">Sirohydrochlorin ferrochelatase</fullName>
            <ecNumber evidence="1">4.99.1.4</ecNumber>
        </recommendedName>
    </domain>
</protein>
<sequence length="475" mass="52234">MDYLPVFLNIKQRDCLVVGGGEIAVRKIRLLLRAHARIHVVSPAISEELSNLLLQSPVITHTAESFRPDHLQDRALAIAATNDHEVNRAVSAAARKAGIPVNVVDNPDLCTFIMPSILDRSPIIVAVSSGGTSPILARLLRSRLEALIPSAYGRLAEYAARFRDKVRQRFIHQENRRFFWERMLQGPFAEMVFAGRDQAAQDYLSEALENSTDQFPTGEVYLVGAGPGDPDLLTFRAMRLMQQADVVIYDRLVSPAILDMVRQDATRIYVGKVRNQHTLPQTSINELLVKLAQEGKHVLRLKGGDPFIFGRGGEEIETLSQHHIPFQVVPGITAASGVASYAGIPLTHRDHAQSCVFVTGHLKDNTIQLDWPALARPNQTIVVYMGLLGVTELCRQLIAHGLQATTPAAIVQQGTTPNQRVLTGTLETLPDIIQQNPLKPPTLIIVGNVVKLHQKLAWFNSTSEPMGTSSGPGYP</sequence>
<keyword id="KW-0169">Cobalamin biosynthesis</keyword>
<keyword id="KW-0456">Lyase</keyword>
<keyword id="KW-0489">Methyltransferase</keyword>
<keyword id="KW-0511">Multifunctional enzyme</keyword>
<keyword id="KW-0520">NAD</keyword>
<keyword id="KW-0560">Oxidoreductase</keyword>
<keyword id="KW-0597">Phosphoprotein</keyword>
<keyword id="KW-0627">Porphyrin biosynthesis</keyword>
<keyword id="KW-1185">Reference proteome</keyword>
<keyword id="KW-0949">S-adenosyl-L-methionine</keyword>
<keyword id="KW-0808">Transferase</keyword>
<name>CYSG_NITEU</name>